<feature type="chain" id="PRO_0000189628" description="Protein lin-7 homolog B">
    <location>
        <begin position="1"/>
        <end position="207"/>
    </location>
</feature>
<feature type="domain" description="L27" evidence="5">
    <location>
        <begin position="10"/>
        <end position="65"/>
    </location>
</feature>
<feature type="domain" description="PDZ" evidence="4">
    <location>
        <begin position="93"/>
        <end position="175"/>
    </location>
</feature>
<feature type="region of interest" description="Disordered" evidence="6">
    <location>
        <begin position="187"/>
        <end position="207"/>
    </location>
</feature>
<feature type="short sequence motif" description="Kinase interacting site" evidence="1">
    <location>
        <begin position="1"/>
        <end position="13"/>
    </location>
</feature>
<feature type="compositionally biased region" description="Polar residues" evidence="6">
    <location>
        <begin position="198"/>
        <end position="207"/>
    </location>
</feature>
<protein>
    <recommendedName>
        <fullName>Protein lin-7 homolog B</fullName>
        <shortName>Lin-7B</shortName>
    </recommendedName>
    <alternativeName>
        <fullName>Mammalian lin-seven protein 2</fullName>
        <shortName>MALS-2</shortName>
    </alternativeName>
    <alternativeName>
        <fullName>Vertebrate lin-7 homolog 2</fullName>
        <shortName>Veli-2</shortName>
    </alternativeName>
</protein>
<reference key="1">
    <citation type="journal article" date="1999" name="Oncogene">
        <title>Isolation and characterization of mammalian homologues of Caenorhabditis elegans lin-7: localization at cell-cell junctions.</title>
        <authorList>
            <person name="Irie M."/>
            <person name="Hata Y."/>
            <person name="Deguchi M."/>
            <person name="Ide N."/>
            <person name="Hirao K."/>
            <person name="Yao I."/>
            <person name="Nishioka H."/>
            <person name="Takai Y."/>
        </authorList>
    </citation>
    <scope>NUCLEOTIDE SEQUENCE [MRNA]</scope>
</reference>
<reference key="2">
    <citation type="journal article" date="1998" name="Cell">
        <title>A tripartite protein complex with the potential to couple synaptic vesicle exocytosis to cell adhesion in brain.</title>
        <authorList>
            <person name="Butz S."/>
            <person name="Okamoto M."/>
            <person name="Suedhof T.C."/>
        </authorList>
    </citation>
    <scope>TISSUE SPECIFICITY</scope>
    <scope>INTERACTION WITH CASK AND APBA1</scope>
</reference>
<reference key="3">
    <citation type="journal article" date="1999" name="J. Neurosci.">
        <title>Characterization of MALS/Velis-1, -2, and -3: a family of mammalian LIN-7 homologs enriched at brain synapses in association with the postsynaptic density-95/NMDA receptor postsynaptic complex.</title>
        <authorList>
            <person name="Jo K."/>
            <person name="Derin R."/>
            <person name="Li M."/>
            <person name="Bredt D.S."/>
        </authorList>
    </citation>
    <scope>TISSUE SPECIFICITY</scope>
    <scope>INTERACTION WITH DLG4 AND GRIN2B</scope>
</reference>
<reference key="4">
    <citation type="journal article" date="2002" name="J. Biol. Chem.">
        <title>The expression of the PDZ protein MALS-1/velis is regulated by calcium and calcineurin in cerebellar granule cells.</title>
        <authorList>
            <person name="Sanna B."/>
            <person name="Kramer D."/>
            <person name="Genazzani A.A."/>
        </authorList>
    </citation>
    <scope>INDUCTION</scope>
</reference>
<reference key="5">
    <citation type="journal article" date="2002" name="J. Neurosci.">
        <title>CASK participates in alternative tripartite complexes in which Mint 1 competes for binding with Caskin 1, a novel CASK-binding protein.</title>
        <authorList>
            <person name="Tabuchi K."/>
            <person name="Biederer T."/>
            <person name="Butz S."/>
            <person name="Suedhof T.C."/>
        </authorList>
    </citation>
    <scope>INTERACTION WITH CASK; APBA1 AND CASKIN1</scope>
</reference>
<reference key="6">
    <citation type="journal article" date="2004" name="J. Biol. Chem.">
        <title>A multiprotein trafficking complex composed of SAP97, CASK, Veli, and Mint1 is associated with inward rectifier Kir2 potassium channels.</title>
        <authorList>
            <person name="Leonoudakis D."/>
            <person name="Conti L.R."/>
            <person name="Radeke C.M."/>
            <person name="McGuire L.M."/>
            <person name="Vandenberg C.A."/>
        </authorList>
    </citation>
    <scope>INTERACTION WITH KCNJ12; KIF17; CASK AND APBA1</scope>
    <scope>FUNCTION</scope>
</reference>
<reference key="7">
    <citation type="journal article" date="2005" name="Am. J. Physiol.">
        <title>Differential localization of the Mammalian Lin 7 (MALS/Veli) PDZ proteins in the kidney.</title>
        <authorList>
            <person name="Olsen O."/>
            <person name="Wade J.B."/>
            <person name="Morin N."/>
            <person name="Bredt D.S."/>
            <person name="Welling P.A."/>
        </authorList>
    </citation>
    <scope>SUBCELLULAR LOCATION</scope>
    <scope>TISSUE SPECIFICITY</scope>
</reference>
<comment type="function">
    <text evidence="1 2 10">Plays a role in establishing and maintaining the asymmetric distribution of channels and receptors at the plasma membrane of polarized cells. Forms membrane-associated multiprotein complexes that may regulate delivery and recycling of proteins to the correct membrane domains. The tripartite complex composed of LIN7 (LIN7A, LIN7B or LIN7C), CASK and APBA1 associates with the motor protein KIF17 to transport vesicles containing N-methyl-D-aspartate (NMDA) receptor subunit NR2B along microtubules (By similarity). This complex may have the potential to couple synaptic vesicle exocytosis to cell adhesion in brain. Ensures the proper localization of GRIN2B (subunit 2B of the NMDA receptor) to neuronal postsynaptic density and may function in localizing synaptic vesicles at synapses where it is recruited by beta-catenin and cadherin. Required to localize Kir2 channels, GABA transporter (SLC6A12) and EGFR/ERBB1, ERBB2, ERBB3 and ERBB4 to the basolateral membrane of epithelial cells. May increase the amplitude of ASIC3 acid-evoked currents by stabilizing the channel at the cell surface (By similarity).</text>
</comment>
<comment type="subunit">
    <text evidence="2 3 7 8 10 12">Forms two exclusive ternary complexes with CASK and CASKIN1 (PubMed:12040031). The brain-specific heterotrimeric complex (LIN-10-LIN-2-LIN-7 complex) composed of at least APBA1, CASK, and LIN7, associates with the motor protein KIF17 to transport vesicles along microtubules (By similarity). Forms a heterotrimeric complex composed of MMP5, LIN7B and PATJ; the N-terminal L27 domain of PALS1 interacts with the L27 domain of PATJ and the C-terminal L27 domain of PALS1 interacts with the L27 domain of LIN7B (By similarity). Forms a heterotrimeric complex with DLG1 and CASK via their L27 domains (PubMed:14960569, PubMed:9753324). Interacts with DLG4 and GRIN2B as well as CDH1 and CTNNB1, the channels KCNJ12/Kir2.2, KCNJ4/Kir2.3 and probably KCNJ2/Kir2.1 and SLC6A12/BGT-1 via its PDZ domain (PubMed:10341223, PubMed:14960569). The association of LIN7A with cadherin and beta-catenin is calcium-dependent, occurs at synaptic junctions and requires the actin cytoskeleton. Interacts with EGFR, ERBB2, ERBB3 and ERBB4 with both PDZ and KID domains (By similarity). Associates with KIF17 via APBA1 (PubMed:14960569). Interacts with ASIC3 (By similarity). Interacts with TOPK. Interacts with RTKN (By similarity). Interacts with APBA1 (PubMed:14960569, PubMed:9753324). Interacts with MPP7 (By similarity). Interacts with DLG2 (By similarity). Interacts with DLG3 (By similarity).</text>
</comment>
<comment type="interaction">
    <interactant intactId="EBI-7001699">
        <id>Q9Z252</id>
    </interactant>
    <interactant intactId="EBI-6997402">
        <id>Q6GMN2</id>
        <label>Baiap2</label>
    </interactant>
    <organismsDiffer>false</organismsDiffer>
    <experiments>3</experiments>
</comment>
<comment type="subcellular location">
    <subcellularLocation>
        <location evidence="11">Cell membrane</location>
        <topology evidence="11">Peripheral membrane protein</topology>
    </subcellularLocation>
    <subcellularLocation>
        <location evidence="1">Basolateral cell membrane</location>
        <topology evidence="1">Peripheral membrane protein</topology>
    </subcellularLocation>
    <subcellularLocation>
        <location evidence="11">Cell junction</location>
    </subcellularLocation>
    <subcellularLocation>
        <location evidence="11">Postsynaptic density membrane</location>
        <topology evidence="11">Peripheral membrane protein</topology>
    </subcellularLocation>
    <subcellularLocation>
        <location evidence="11">Cell junction</location>
        <location evidence="11">Tight junction</location>
    </subcellularLocation>
    <text evidence="1">Mainly basolateral in renal epithelial cells (By similarity).</text>
</comment>
<comment type="tissue specificity">
    <text evidence="7 11 12">Expressed only in brain.</text>
</comment>
<comment type="induction">
    <text evidence="9">Up-regulated by cell depolarization and calcium entry through L-type calcium channels.</text>
</comment>
<comment type="domain">
    <text evidence="1">The kinase interacting site is required for proper delivery of ERBB2 to the basolateral membrane.</text>
</comment>
<comment type="domain">
    <text evidence="1">The PDZ domain regulates endocytosis and recycling of the receptor at the membrane.</text>
</comment>
<comment type="domain">
    <text evidence="1">The L27 domain mediates interaction with CASK and is involved in the formation of multimeric complexes and the association of LIN7 to membranes.</text>
</comment>
<comment type="similarity">
    <text evidence="13">Belongs to the lin-7 family.</text>
</comment>
<gene>
    <name type="primary">Lin7b</name>
    <name type="synonym">Mals2</name>
    <name type="synonym">Veli1a</name>
    <name type="synonym">Veli2</name>
</gene>
<dbReference type="EMBL" id="AF090133">
    <property type="protein sequence ID" value="AAC78072.1"/>
    <property type="molecule type" value="mRNA"/>
</dbReference>
<dbReference type="RefSeq" id="NP_068526.1">
    <property type="nucleotide sequence ID" value="NM_021758.2"/>
</dbReference>
<dbReference type="SMR" id="Q9Z252"/>
<dbReference type="BioGRID" id="248805">
    <property type="interactions" value="2"/>
</dbReference>
<dbReference type="CORUM" id="Q9Z252"/>
<dbReference type="FunCoup" id="Q9Z252">
    <property type="interactions" value="1536"/>
</dbReference>
<dbReference type="IntAct" id="Q9Z252">
    <property type="interactions" value="2"/>
</dbReference>
<dbReference type="MINT" id="Q9Z252"/>
<dbReference type="STRING" id="10116.ENSRNOP00000028164"/>
<dbReference type="iPTMnet" id="Q9Z252"/>
<dbReference type="PhosphoSitePlus" id="Q9Z252"/>
<dbReference type="PaxDb" id="10116-ENSRNOP00000028164"/>
<dbReference type="Ensembl" id="ENSRNOT00000028164.4">
    <property type="protein sequence ID" value="ENSRNOP00000028164.2"/>
    <property type="gene ID" value="ENSRNOG00000020746.4"/>
</dbReference>
<dbReference type="GeneID" id="60377"/>
<dbReference type="KEGG" id="rno:60377"/>
<dbReference type="AGR" id="RGD:620730"/>
<dbReference type="CTD" id="64130"/>
<dbReference type="RGD" id="620730">
    <property type="gene designation" value="Lin7b"/>
</dbReference>
<dbReference type="eggNOG" id="KOG3550">
    <property type="taxonomic scope" value="Eukaryota"/>
</dbReference>
<dbReference type="GeneTree" id="ENSGT00940000153222"/>
<dbReference type="HOGENOM" id="CLU_097962_0_0_1"/>
<dbReference type="InParanoid" id="Q9Z252"/>
<dbReference type="OMA" id="TDMATMT"/>
<dbReference type="OrthoDB" id="45612at9989"/>
<dbReference type="PhylomeDB" id="Q9Z252"/>
<dbReference type="TreeFam" id="TF316850"/>
<dbReference type="Reactome" id="R-RNO-212676">
    <property type="pathway name" value="Dopamine Neurotransmitter Release Cycle"/>
</dbReference>
<dbReference type="Reactome" id="R-RNO-5666185">
    <property type="pathway name" value="RHO GTPases Activate Rhotekin and Rhophilins"/>
</dbReference>
<dbReference type="PRO" id="PR:Q9Z252"/>
<dbReference type="Proteomes" id="UP000002494">
    <property type="component" value="Chromosome 1"/>
</dbReference>
<dbReference type="Bgee" id="ENSRNOG00000020746">
    <property type="expression patterns" value="Expressed in frontal cortex and 12 other cell types or tissues"/>
</dbReference>
<dbReference type="GO" id="GO:0016323">
    <property type="term" value="C:basolateral plasma membrane"/>
    <property type="evidence" value="ECO:0000318"/>
    <property type="project" value="GO_Central"/>
</dbReference>
<dbReference type="GO" id="GO:0005923">
    <property type="term" value="C:bicellular tight junction"/>
    <property type="evidence" value="ECO:0007669"/>
    <property type="project" value="UniProtKB-SubCell"/>
</dbReference>
<dbReference type="GO" id="GO:0005911">
    <property type="term" value="C:cell-cell junction"/>
    <property type="evidence" value="ECO:0000314"/>
    <property type="project" value="RGD"/>
</dbReference>
<dbReference type="GO" id="GO:0097025">
    <property type="term" value="C:MPP7-DLG1-LIN7 complex"/>
    <property type="evidence" value="ECO:0000318"/>
    <property type="project" value="GO_Central"/>
</dbReference>
<dbReference type="GO" id="GO:0005886">
    <property type="term" value="C:plasma membrane"/>
    <property type="evidence" value="ECO:0000266"/>
    <property type="project" value="RGD"/>
</dbReference>
<dbReference type="GO" id="GO:0098839">
    <property type="term" value="C:postsynaptic density membrane"/>
    <property type="evidence" value="ECO:0007669"/>
    <property type="project" value="UniProtKB-SubCell"/>
</dbReference>
<dbReference type="GO" id="GO:0099092">
    <property type="term" value="C:postsynaptic density, intracellular component"/>
    <property type="evidence" value="ECO:0000314"/>
    <property type="project" value="SynGO"/>
</dbReference>
<dbReference type="GO" id="GO:0098793">
    <property type="term" value="C:presynapse"/>
    <property type="evidence" value="ECO:0007669"/>
    <property type="project" value="GOC"/>
</dbReference>
<dbReference type="GO" id="GO:0045202">
    <property type="term" value="C:synapse"/>
    <property type="evidence" value="ECO:0000318"/>
    <property type="project" value="GO_Central"/>
</dbReference>
<dbReference type="GO" id="GO:0030165">
    <property type="term" value="F:PDZ domain binding"/>
    <property type="evidence" value="ECO:0000314"/>
    <property type="project" value="RGD"/>
</dbReference>
<dbReference type="GO" id="GO:0019904">
    <property type="term" value="F:protein domain specific binding"/>
    <property type="evidence" value="ECO:0000266"/>
    <property type="project" value="RGD"/>
</dbReference>
<dbReference type="GO" id="GO:0019901">
    <property type="term" value="F:protein kinase binding"/>
    <property type="evidence" value="ECO:0000353"/>
    <property type="project" value="RGD"/>
</dbReference>
<dbReference type="GO" id="GO:0030674">
    <property type="term" value="F:protein-macromolecule adaptor activity"/>
    <property type="evidence" value="ECO:0000318"/>
    <property type="project" value="GO_Central"/>
</dbReference>
<dbReference type="GO" id="GO:0007043">
    <property type="term" value="P:cell-cell junction assembly"/>
    <property type="evidence" value="ECO:0000303"/>
    <property type="project" value="RGD"/>
</dbReference>
<dbReference type="GO" id="GO:0006887">
    <property type="term" value="P:exocytosis"/>
    <property type="evidence" value="ECO:0007669"/>
    <property type="project" value="UniProtKB-KW"/>
</dbReference>
<dbReference type="GO" id="GO:0007269">
    <property type="term" value="P:neurotransmitter secretion"/>
    <property type="evidence" value="ECO:0000266"/>
    <property type="project" value="RGD"/>
</dbReference>
<dbReference type="GO" id="GO:0015031">
    <property type="term" value="P:protein transport"/>
    <property type="evidence" value="ECO:0007669"/>
    <property type="project" value="UniProtKB-KW"/>
</dbReference>
<dbReference type="GO" id="GO:0008582">
    <property type="term" value="P:regulation of synaptic assembly at neuromuscular junction"/>
    <property type="evidence" value="ECO:0000318"/>
    <property type="project" value="GO_Central"/>
</dbReference>
<dbReference type="GO" id="GO:0048489">
    <property type="term" value="P:synaptic vesicle transport"/>
    <property type="evidence" value="ECO:0000318"/>
    <property type="project" value="GO_Central"/>
</dbReference>
<dbReference type="CDD" id="cd06796">
    <property type="entry name" value="PDZ_Lin-7-like"/>
    <property type="match status" value="1"/>
</dbReference>
<dbReference type="FunFam" id="2.30.42.10:FF:000076">
    <property type="entry name" value="Protein lin-7 homolog"/>
    <property type="match status" value="1"/>
</dbReference>
<dbReference type="Gene3D" id="2.30.42.10">
    <property type="match status" value="1"/>
</dbReference>
<dbReference type="Gene3D" id="1.10.287.650">
    <property type="entry name" value="L27 domain"/>
    <property type="match status" value="1"/>
</dbReference>
<dbReference type="InterPro" id="IPR014775">
    <property type="entry name" value="L27_C"/>
</dbReference>
<dbReference type="InterPro" id="IPR004172">
    <property type="entry name" value="L27_dom"/>
</dbReference>
<dbReference type="InterPro" id="IPR036892">
    <property type="entry name" value="L27_dom_sf"/>
</dbReference>
<dbReference type="InterPro" id="IPR017365">
    <property type="entry name" value="LIN7"/>
</dbReference>
<dbReference type="InterPro" id="IPR051109">
    <property type="entry name" value="MAM_complex_regulator"/>
</dbReference>
<dbReference type="InterPro" id="IPR001478">
    <property type="entry name" value="PDZ"/>
</dbReference>
<dbReference type="InterPro" id="IPR036034">
    <property type="entry name" value="PDZ_sf"/>
</dbReference>
<dbReference type="PANTHER" id="PTHR14063">
    <property type="entry name" value="PROTEIN LIN-7 HOMOLOG"/>
    <property type="match status" value="1"/>
</dbReference>
<dbReference type="Pfam" id="PF02828">
    <property type="entry name" value="L27"/>
    <property type="match status" value="1"/>
</dbReference>
<dbReference type="Pfam" id="PF00595">
    <property type="entry name" value="PDZ"/>
    <property type="match status" value="1"/>
</dbReference>
<dbReference type="PIRSF" id="PIRSF038039">
    <property type="entry name" value="Lin-7_homologue"/>
    <property type="match status" value="1"/>
</dbReference>
<dbReference type="SMART" id="SM00569">
    <property type="entry name" value="L27"/>
    <property type="match status" value="1"/>
</dbReference>
<dbReference type="SMART" id="SM00228">
    <property type="entry name" value="PDZ"/>
    <property type="match status" value="1"/>
</dbReference>
<dbReference type="SUPFAM" id="SSF101288">
    <property type="entry name" value="L27 domain"/>
    <property type="match status" value="1"/>
</dbReference>
<dbReference type="SUPFAM" id="SSF50156">
    <property type="entry name" value="PDZ domain-like"/>
    <property type="match status" value="1"/>
</dbReference>
<dbReference type="PROSITE" id="PS51022">
    <property type="entry name" value="L27"/>
    <property type="match status" value="1"/>
</dbReference>
<dbReference type="PROSITE" id="PS50106">
    <property type="entry name" value="PDZ"/>
    <property type="match status" value="1"/>
</dbReference>
<accession>Q9Z252</accession>
<keyword id="KW-0965">Cell junction</keyword>
<keyword id="KW-1003">Cell membrane</keyword>
<keyword id="KW-0268">Exocytosis</keyword>
<keyword id="KW-0472">Membrane</keyword>
<keyword id="KW-0628">Postsynaptic cell membrane</keyword>
<keyword id="KW-0653">Protein transport</keyword>
<keyword id="KW-1185">Reference proteome</keyword>
<keyword id="KW-0770">Synapse</keyword>
<keyword id="KW-0796">Tight junction</keyword>
<keyword id="KW-0813">Transport</keyword>
<proteinExistence type="evidence at protein level"/>
<organism>
    <name type="scientific">Rattus norvegicus</name>
    <name type="common">Rat</name>
    <dbReference type="NCBI Taxonomy" id="10116"/>
    <lineage>
        <taxon>Eukaryota</taxon>
        <taxon>Metazoa</taxon>
        <taxon>Chordata</taxon>
        <taxon>Craniata</taxon>
        <taxon>Vertebrata</taxon>
        <taxon>Euteleostomi</taxon>
        <taxon>Mammalia</taxon>
        <taxon>Eutheria</taxon>
        <taxon>Euarchontoglires</taxon>
        <taxon>Glires</taxon>
        <taxon>Rodentia</taxon>
        <taxon>Myomorpha</taxon>
        <taxon>Muroidea</taxon>
        <taxon>Muridae</taxon>
        <taxon>Murinae</taxon>
        <taxon>Rattus</taxon>
    </lineage>
</organism>
<name>LIN7B_RAT</name>
<sequence length="207" mass="22900">MAALVEPLGLERDVSRAVELLERLQRSGELPPQKLQALQRVLQSRFCSAIREVYEQLYDTLDITGSAEVRAHATAKATVAAFTASEGHAHPRVVELPKTDEGLGFNIMGGKEQNSPIYISRVIPGGVADRHGGLKRGDQLLSVNGVSVEGEHHEKAVELLKAAQGSVKLVVRYTPRVLEEMEARFEKMRSARRRQQHHSYSSLESRG</sequence>
<evidence type="ECO:0000250" key="1"/>
<evidence type="ECO:0000250" key="2">
    <source>
        <dbReference type="UniProtKB" id="O88951"/>
    </source>
</evidence>
<evidence type="ECO:0000250" key="3">
    <source>
        <dbReference type="UniProtKB" id="Q9HAP6"/>
    </source>
</evidence>
<evidence type="ECO:0000255" key="4">
    <source>
        <dbReference type="PROSITE-ProRule" id="PRU00143"/>
    </source>
</evidence>
<evidence type="ECO:0000255" key="5">
    <source>
        <dbReference type="PROSITE-ProRule" id="PRU00365"/>
    </source>
</evidence>
<evidence type="ECO:0000256" key="6">
    <source>
        <dbReference type="SAM" id="MobiDB-lite"/>
    </source>
</evidence>
<evidence type="ECO:0000269" key="7">
    <source>
    </source>
</evidence>
<evidence type="ECO:0000269" key="8">
    <source>
    </source>
</evidence>
<evidence type="ECO:0000269" key="9">
    <source>
    </source>
</evidence>
<evidence type="ECO:0000269" key="10">
    <source>
    </source>
</evidence>
<evidence type="ECO:0000269" key="11">
    <source>
    </source>
</evidence>
<evidence type="ECO:0000269" key="12">
    <source>
    </source>
</evidence>
<evidence type="ECO:0000305" key="13"/>